<organism>
    <name type="scientific">Streptococcus sanguinis (strain SK36)</name>
    <dbReference type="NCBI Taxonomy" id="388919"/>
    <lineage>
        <taxon>Bacteria</taxon>
        <taxon>Bacillati</taxon>
        <taxon>Bacillota</taxon>
        <taxon>Bacilli</taxon>
        <taxon>Lactobacillales</taxon>
        <taxon>Streptococcaceae</taxon>
        <taxon>Streptococcus</taxon>
    </lineage>
</organism>
<sequence>MSNIYDLANELSRNLRELPEYKAVAESKKAVDADSEAKAIFTDYLAFQQELQQLAQTGQVPTQEVQDKMTSFGEKIQGNAVLSEFFNKQQQLSIYLADIERIIFDPVQDLLK</sequence>
<dbReference type="EMBL" id="CP000387">
    <property type="protein sequence ID" value="ABN44859.1"/>
    <property type="molecule type" value="Genomic_DNA"/>
</dbReference>
<dbReference type="RefSeq" id="WP_002900045.1">
    <property type="nucleotide sequence ID" value="NC_009009.1"/>
</dbReference>
<dbReference type="RefSeq" id="YP_001035409.1">
    <property type="nucleotide sequence ID" value="NC_009009.1"/>
</dbReference>
<dbReference type="SMR" id="A3CNV4"/>
<dbReference type="STRING" id="388919.SSA_1465"/>
<dbReference type="KEGG" id="ssa:SSA_1465"/>
<dbReference type="PATRIC" id="fig|388919.9.peg.1390"/>
<dbReference type="eggNOG" id="COG3679">
    <property type="taxonomic scope" value="Bacteria"/>
</dbReference>
<dbReference type="HOGENOM" id="CLU_140243_2_0_9"/>
<dbReference type="OrthoDB" id="9811402at2"/>
<dbReference type="Proteomes" id="UP000002148">
    <property type="component" value="Chromosome"/>
</dbReference>
<dbReference type="Gene3D" id="1.20.1500.10">
    <property type="entry name" value="YheA/YmcA-like"/>
    <property type="match status" value="1"/>
</dbReference>
<dbReference type="HAMAP" id="MF_01526">
    <property type="entry name" value="UPF0342"/>
    <property type="match status" value="1"/>
</dbReference>
<dbReference type="InterPro" id="IPR010368">
    <property type="entry name" value="Com_YlbF"/>
</dbReference>
<dbReference type="InterPro" id="IPR023378">
    <property type="entry name" value="YheA/YmcA-like_dom_sf"/>
</dbReference>
<dbReference type="NCBIfam" id="NF010209">
    <property type="entry name" value="PRK13676.1-1"/>
    <property type="match status" value="1"/>
</dbReference>
<dbReference type="Pfam" id="PF06133">
    <property type="entry name" value="Com_YlbF"/>
    <property type="match status" value="1"/>
</dbReference>
<dbReference type="SUPFAM" id="SSF158622">
    <property type="entry name" value="YheA/YmcA-like"/>
    <property type="match status" value="1"/>
</dbReference>
<comment type="similarity">
    <text evidence="1">Belongs to the UPF0342 family.</text>
</comment>
<keyword id="KW-1185">Reference proteome</keyword>
<evidence type="ECO:0000255" key="1">
    <source>
        <dbReference type="HAMAP-Rule" id="MF_01526"/>
    </source>
</evidence>
<reference key="1">
    <citation type="journal article" date="2007" name="J. Bacteriol.">
        <title>Genome of the opportunistic pathogen Streptococcus sanguinis.</title>
        <authorList>
            <person name="Xu P."/>
            <person name="Alves J.M."/>
            <person name="Kitten T."/>
            <person name="Brown A."/>
            <person name="Chen Z."/>
            <person name="Ozaki L.S."/>
            <person name="Manque P."/>
            <person name="Ge X."/>
            <person name="Serrano M.G."/>
            <person name="Puiu D."/>
            <person name="Hendricks S."/>
            <person name="Wang Y."/>
            <person name="Chaplin M.D."/>
            <person name="Akan D."/>
            <person name="Paik S."/>
            <person name="Peterson D.L."/>
            <person name="Macrina F.L."/>
            <person name="Buck G.A."/>
        </authorList>
    </citation>
    <scope>NUCLEOTIDE SEQUENCE [LARGE SCALE GENOMIC DNA]</scope>
    <source>
        <strain>SK36</strain>
    </source>
</reference>
<feature type="chain" id="PRO_0000292753" description="UPF0342 protein SSA_1465">
    <location>
        <begin position="1"/>
        <end position="112"/>
    </location>
</feature>
<name>Y1465_STRSV</name>
<gene>
    <name type="ordered locus">SSA_1465</name>
</gene>
<accession>A3CNV4</accession>
<proteinExistence type="inferred from homology"/>
<protein>
    <recommendedName>
        <fullName evidence="1">UPF0342 protein SSA_1465</fullName>
    </recommendedName>
</protein>